<proteinExistence type="inferred from homology"/>
<gene>
    <name evidence="1" type="primary">fumC</name>
</gene>
<accession>Q60022</accession>
<reference key="1">
    <citation type="journal article" date="1998" name="J. Ferment. Bioeng.">
        <title>Cloning and nucleotide sequencing of genes encoding Mn-superoxide dismutase and class II fumarase from Thermus aquaticus YT-1.</title>
        <authorList>
            <person name="Motoshima H."/>
            <person name="Minagawa E."/>
            <person name="Tsukasaki F."/>
            <person name="Kaminogawa S."/>
        </authorList>
    </citation>
    <scope>NUCLEOTIDE SEQUENCE [GENOMIC DNA]</scope>
    <source>
        <strain>ATCC 25104 / DSM 625 / JCM 10724 / NBRC 103206 / NCIMB 11243 / YT-1</strain>
    </source>
</reference>
<protein>
    <recommendedName>
        <fullName evidence="1">Fumarate hydratase class II</fullName>
        <shortName evidence="1">Fumarase C</shortName>
        <ecNumber evidence="1">4.2.1.2</ecNumber>
    </recommendedName>
    <alternativeName>
        <fullName evidence="1">Aerobic fumarase</fullName>
    </alternativeName>
    <alternativeName>
        <fullName evidence="1">Iron-independent fumarase</fullName>
    </alternativeName>
</protein>
<comment type="function">
    <text evidence="1">Involved in the TCA cycle. Catalyzes the stereospecific interconversion of fumarate to L-malate.</text>
</comment>
<comment type="catalytic activity">
    <reaction evidence="1">
        <text>(S)-malate = fumarate + H2O</text>
        <dbReference type="Rhea" id="RHEA:12460"/>
        <dbReference type="ChEBI" id="CHEBI:15377"/>
        <dbReference type="ChEBI" id="CHEBI:15589"/>
        <dbReference type="ChEBI" id="CHEBI:29806"/>
        <dbReference type="EC" id="4.2.1.2"/>
    </reaction>
</comment>
<comment type="pathway">
    <text evidence="1">Carbohydrate metabolism; tricarboxylic acid cycle; (S)-malate from fumarate: step 1/1.</text>
</comment>
<comment type="subunit">
    <text evidence="1">Homotetramer.</text>
</comment>
<comment type="subcellular location">
    <subcellularLocation>
        <location evidence="1">Cytoplasm</location>
    </subcellularLocation>
</comment>
<comment type="miscellaneous">
    <text evidence="1">There are 2 substrate-binding sites: the catalytic A site, and the non-catalytic B site that may play a role in the transfer of substrate or product between the active site and the solvent. Alternatively, the B site may bind allosteric effectors.</text>
</comment>
<comment type="similarity">
    <text evidence="1">Belongs to the class-II fumarase/aspartase family. Fumarase subfamily.</text>
</comment>
<dbReference type="EC" id="4.2.1.2" evidence="1"/>
<dbReference type="EMBL" id="D84646">
    <property type="protein sequence ID" value="BAA12702.1"/>
    <property type="molecule type" value="Genomic_DNA"/>
</dbReference>
<dbReference type="PIR" id="T45269">
    <property type="entry name" value="T45269"/>
</dbReference>
<dbReference type="SMR" id="Q60022"/>
<dbReference type="UniPathway" id="UPA00223">
    <property type="reaction ID" value="UER01007"/>
</dbReference>
<dbReference type="GO" id="GO:0005737">
    <property type="term" value="C:cytoplasm"/>
    <property type="evidence" value="ECO:0007669"/>
    <property type="project" value="UniProtKB-SubCell"/>
</dbReference>
<dbReference type="GO" id="GO:0004333">
    <property type="term" value="F:fumarate hydratase activity"/>
    <property type="evidence" value="ECO:0007669"/>
    <property type="project" value="UniProtKB-UniRule"/>
</dbReference>
<dbReference type="GO" id="GO:0006106">
    <property type="term" value="P:fumarate metabolic process"/>
    <property type="evidence" value="ECO:0007669"/>
    <property type="project" value="InterPro"/>
</dbReference>
<dbReference type="GO" id="GO:0006108">
    <property type="term" value="P:malate metabolic process"/>
    <property type="evidence" value="ECO:0007669"/>
    <property type="project" value="TreeGrafter"/>
</dbReference>
<dbReference type="GO" id="GO:0006099">
    <property type="term" value="P:tricarboxylic acid cycle"/>
    <property type="evidence" value="ECO:0007669"/>
    <property type="project" value="UniProtKB-UniRule"/>
</dbReference>
<dbReference type="CDD" id="cd01362">
    <property type="entry name" value="Fumarase_classII"/>
    <property type="match status" value="1"/>
</dbReference>
<dbReference type="FunFam" id="1.10.40.30:FF:000002">
    <property type="entry name" value="Fumarate hydratase class II"/>
    <property type="match status" value="1"/>
</dbReference>
<dbReference type="FunFam" id="1.10.275.10:FF:000001">
    <property type="entry name" value="Fumarate hydratase, mitochondrial"/>
    <property type="match status" value="1"/>
</dbReference>
<dbReference type="FunFam" id="1.20.200.10:FF:000001">
    <property type="entry name" value="Fumarate hydratase, mitochondrial"/>
    <property type="match status" value="1"/>
</dbReference>
<dbReference type="Gene3D" id="1.10.40.30">
    <property type="entry name" value="Fumarase/aspartase (C-terminal domain)"/>
    <property type="match status" value="1"/>
</dbReference>
<dbReference type="Gene3D" id="1.20.200.10">
    <property type="entry name" value="Fumarase/aspartase (Central domain)"/>
    <property type="match status" value="1"/>
</dbReference>
<dbReference type="Gene3D" id="1.10.275.10">
    <property type="entry name" value="Fumarase/aspartase (N-terminal domain)"/>
    <property type="match status" value="1"/>
</dbReference>
<dbReference type="HAMAP" id="MF_00743">
    <property type="entry name" value="FumaraseC"/>
    <property type="match status" value="1"/>
</dbReference>
<dbReference type="InterPro" id="IPR005677">
    <property type="entry name" value="Fum_hydII"/>
</dbReference>
<dbReference type="InterPro" id="IPR024083">
    <property type="entry name" value="Fumarase/histidase_N"/>
</dbReference>
<dbReference type="InterPro" id="IPR018951">
    <property type="entry name" value="Fumarase_C_C"/>
</dbReference>
<dbReference type="InterPro" id="IPR020557">
    <property type="entry name" value="Fumarate_lyase_CS"/>
</dbReference>
<dbReference type="InterPro" id="IPR000362">
    <property type="entry name" value="Fumarate_lyase_fam"/>
</dbReference>
<dbReference type="InterPro" id="IPR022761">
    <property type="entry name" value="Fumarate_lyase_N"/>
</dbReference>
<dbReference type="InterPro" id="IPR008948">
    <property type="entry name" value="L-Aspartase-like"/>
</dbReference>
<dbReference type="NCBIfam" id="TIGR00979">
    <property type="entry name" value="fumC_II"/>
    <property type="match status" value="1"/>
</dbReference>
<dbReference type="NCBIfam" id="NF008909">
    <property type="entry name" value="PRK12273.1"/>
    <property type="match status" value="1"/>
</dbReference>
<dbReference type="PANTHER" id="PTHR11444">
    <property type="entry name" value="ASPARTATEAMMONIA/ARGININOSUCCINATE/ADENYLOSUCCINATE LYASE"/>
    <property type="match status" value="1"/>
</dbReference>
<dbReference type="PANTHER" id="PTHR11444:SF1">
    <property type="entry name" value="FUMARATE HYDRATASE, MITOCHONDRIAL"/>
    <property type="match status" value="1"/>
</dbReference>
<dbReference type="Pfam" id="PF10415">
    <property type="entry name" value="FumaraseC_C"/>
    <property type="match status" value="1"/>
</dbReference>
<dbReference type="Pfam" id="PF00206">
    <property type="entry name" value="Lyase_1"/>
    <property type="match status" value="1"/>
</dbReference>
<dbReference type="PRINTS" id="PR00149">
    <property type="entry name" value="FUMRATELYASE"/>
</dbReference>
<dbReference type="SUPFAM" id="SSF48557">
    <property type="entry name" value="L-aspartase-like"/>
    <property type="match status" value="1"/>
</dbReference>
<dbReference type="PROSITE" id="PS00163">
    <property type="entry name" value="FUMARATE_LYASES"/>
    <property type="match status" value="1"/>
</dbReference>
<sequence length="466" mass="50954">MEYRVERDTMGEVKVPADRYWGAQTQRSLEHFRIGAWRFRMPLEIIRAYGMLKKAAARANLELGELPEEIARAIIQAAEEVIAGKLDDHFPLVVFQTGSGTQTNMNVNEVIANRASEILGKPLGSKYVHPNDHVNRGQSSNDTFPTAMYVATVLALHQHLYPAVEGLIATFEEKARAFDGIVKVGRTHLMDAVPITLGQEVGSWAAQLRNTLAMVKEAEKGLYNLAIGGTAVGTGLNAHPRFGELVARYLAEETGLPFRVAENRFAALAAHDELVHVMGALRTLAGALMKIGNDIRWLASGPYGGIGEIFIPANEPGSSIMPGKVNPTQVEALPWVVVRVFGNDQAVAFAGSQGNFQLNVYKPVMVDAALESIKLLGDAVASFDQHLAQGIEPNLERIEEHLNKNPMLATALNKAIGYDKAAEIVKKAIKEKKSLKQAALELGYLTEEEFDRIVVPMRLAKPHENA</sequence>
<name>FUMC_THEAQ</name>
<organism>
    <name type="scientific">Thermus aquaticus</name>
    <dbReference type="NCBI Taxonomy" id="271"/>
    <lineage>
        <taxon>Bacteria</taxon>
        <taxon>Thermotogati</taxon>
        <taxon>Deinococcota</taxon>
        <taxon>Deinococci</taxon>
        <taxon>Thermales</taxon>
        <taxon>Thermaceae</taxon>
        <taxon>Thermus</taxon>
    </lineage>
</organism>
<keyword id="KW-0963">Cytoplasm</keyword>
<keyword id="KW-0456">Lyase</keyword>
<keyword id="KW-0816">Tricarboxylic acid cycle</keyword>
<feature type="chain" id="PRO_0000161326" description="Fumarate hydratase class II">
    <location>
        <begin position="1"/>
        <end position="466"/>
    </location>
</feature>
<feature type="active site" description="Proton donor/acceptor" evidence="1">
    <location>
        <position position="188"/>
    </location>
</feature>
<feature type="active site" evidence="1">
    <location>
        <position position="318"/>
    </location>
</feature>
<feature type="binding site" evidence="1">
    <location>
        <begin position="99"/>
        <end position="101"/>
    </location>
    <ligand>
        <name>substrate</name>
    </ligand>
</feature>
<feature type="binding site" description="in site B" evidence="1">
    <location>
        <begin position="129"/>
        <end position="132"/>
    </location>
    <ligand>
        <name>substrate</name>
    </ligand>
</feature>
<feature type="binding site" evidence="1">
    <location>
        <begin position="139"/>
        <end position="141"/>
    </location>
    <ligand>
        <name>substrate</name>
    </ligand>
</feature>
<feature type="binding site" evidence="1">
    <location>
        <position position="187"/>
    </location>
    <ligand>
        <name>substrate</name>
    </ligand>
</feature>
<feature type="binding site" evidence="1">
    <location>
        <position position="319"/>
    </location>
    <ligand>
        <name>substrate</name>
    </ligand>
</feature>
<feature type="binding site" evidence="1">
    <location>
        <begin position="324"/>
        <end position="326"/>
    </location>
    <ligand>
        <name>substrate</name>
    </ligand>
</feature>
<feature type="site" description="Important for catalytic activity" evidence="1">
    <location>
        <position position="331"/>
    </location>
</feature>
<evidence type="ECO:0000255" key="1">
    <source>
        <dbReference type="HAMAP-Rule" id="MF_00743"/>
    </source>
</evidence>